<sequence length="252" mass="28030">MKIKMRGQDVKVFYGSKEALHGITLDIPEHQVTALIGPSGCGKSTFLRCFNRMNDTIEGAKITGLITLDGENIYESRIDVVELRARVGMVFQKPSPFPKSIFENVAYGPRIHGLVKSRAELHDVVEKSLRQAGLFEEVKDRLHEAGTSLSGGQQQRLCIARAIAVSPEVILMDEPCSALDPIATARIEELIDALRKDYTIVIVTHSMQQAARVSQYTAMFHLGHLVEVGETEVMFTSPKEQRTQDYITGRFG</sequence>
<evidence type="ECO:0000255" key="1">
    <source>
        <dbReference type="HAMAP-Rule" id="MF_01702"/>
    </source>
</evidence>
<protein>
    <recommendedName>
        <fullName evidence="1">Phosphate import ATP-binding protein PstB</fullName>
        <ecNumber evidence="1">7.3.2.1</ecNumber>
    </recommendedName>
    <alternativeName>
        <fullName evidence="1">ABC phosphate transporter</fullName>
    </alternativeName>
    <alternativeName>
        <fullName evidence="1">Phosphate-transporting ATPase</fullName>
    </alternativeName>
</protein>
<feature type="chain" id="PRO_0000092783" description="Phosphate import ATP-binding protein PstB">
    <location>
        <begin position="1"/>
        <end position="252"/>
    </location>
</feature>
<feature type="domain" description="ABC transporter" evidence="1">
    <location>
        <begin position="5"/>
        <end position="247"/>
    </location>
</feature>
<feature type="binding site" evidence="1">
    <location>
        <begin position="37"/>
        <end position="44"/>
    </location>
    <ligand>
        <name>ATP</name>
        <dbReference type="ChEBI" id="CHEBI:30616"/>
    </ligand>
</feature>
<accession>Q6G4T6</accession>
<proteinExistence type="inferred from homology"/>
<comment type="function">
    <text evidence="1">Part of the ABC transporter complex PstSACB involved in phosphate import. Responsible for energy coupling to the transport system.</text>
</comment>
<comment type="catalytic activity">
    <reaction evidence="1">
        <text>phosphate(out) + ATP + H2O = ADP + 2 phosphate(in) + H(+)</text>
        <dbReference type="Rhea" id="RHEA:24440"/>
        <dbReference type="ChEBI" id="CHEBI:15377"/>
        <dbReference type="ChEBI" id="CHEBI:15378"/>
        <dbReference type="ChEBI" id="CHEBI:30616"/>
        <dbReference type="ChEBI" id="CHEBI:43474"/>
        <dbReference type="ChEBI" id="CHEBI:456216"/>
        <dbReference type="EC" id="7.3.2.1"/>
    </reaction>
</comment>
<comment type="subunit">
    <text evidence="1">The complex is composed of two ATP-binding proteins (PstB), two transmembrane proteins (PstC and PstA) and a solute-binding protein (PstS).</text>
</comment>
<comment type="subcellular location">
    <subcellularLocation>
        <location evidence="1">Cell inner membrane</location>
        <topology evidence="1">Peripheral membrane protein</topology>
    </subcellularLocation>
</comment>
<comment type="similarity">
    <text evidence="1">Belongs to the ABC transporter superfamily. Phosphate importer (TC 3.A.1.7) family.</text>
</comment>
<reference key="1">
    <citation type="journal article" date="2004" name="Proc. Natl. Acad. Sci. U.S.A.">
        <title>The louse-borne human pathogen Bartonella quintana is a genomic derivative of the zoonotic agent Bartonella henselae.</title>
        <authorList>
            <person name="Alsmark U.C.M."/>
            <person name="Frank A.C."/>
            <person name="Karlberg E.O."/>
            <person name="Legault B.-A."/>
            <person name="Ardell D.H."/>
            <person name="Canbaeck B."/>
            <person name="Eriksson A.-S."/>
            <person name="Naeslund A.K."/>
            <person name="Handley S.A."/>
            <person name="Huvet M."/>
            <person name="La Scola B."/>
            <person name="Holmberg M."/>
            <person name="Andersson S.G.E."/>
        </authorList>
    </citation>
    <scope>NUCLEOTIDE SEQUENCE [LARGE SCALE GENOMIC DNA]</scope>
    <source>
        <strain>ATCC 49882 / DSM 28221 / CCUG 30454 / Houston 1</strain>
    </source>
</reference>
<name>PSTB_BARHE</name>
<gene>
    <name evidence="1" type="primary">pstB</name>
    <name type="ordered locus">BH02460</name>
</gene>
<organism>
    <name type="scientific">Bartonella henselae (strain ATCC 49882 / DSM 28221 / CCUG 30454 / Houston 1)</name>
    <name type="common">Rochalimaea henselae</name>
    <dbReference type="NCBI Taxonomy" id="283166"/>
    <lineage>
        <taxon>Bacteria</taxon>
        <taxon>Pseudomonadati</taxon>
        <taxon>Pseudomonadota</taxon>
        <taxon>Alphaproteobacteria</taxon>
        <taxon>Hyphomicrobiales</taxon>
        <taxon>Bartonellaceae</taxon>
        <taxon>Bartonella</taxon>
    </lineage>
</organism>
<dbReference type="EC" id="7.3.2.1" evidence="1"/>
<dbReference type="EMBL" id="BX897699">
    <property type="protein sequence ID" value="CAF27058.1"/>
    <property type="molecule type" value="Genomic_DNA"/>
</dbReference>
<dbReference type="RefSeq" id="WP_011180197.1">
    <property type="nucleotide sequence ID" value="NZ_LRIJ02000001.1"/>
</dbReference>
<dbReference type="SMR" id="Q6G4T6"/>
<dbReference type="PaxDb" id="283166-BH02460"/>
<dbReference type="EnsemblBacteria" id="CAF27058">
    <property type="protein sequence ID" value="CAF27058"/>
    <property type="gene ID" value="BH02460"/>
</dbReference>
<dbReference type="GeneID" id="92984914"/>
<dbReference type="KEGG" id="bhe:BH02460"/>
<dbReference type="eggNOG" id="COG1117">
    <property type="taxonomic scope" value="Bacteria"/>
</dbReference>
<dbReference type="OrthoDB" id="9802264at2"/>
<dbReference type="Proteomes" id="UP000000421">
    <property type="component" value="Chromosome"/>
</dbReference>
<dbReference type="GO" id="GO:0005886">
    <property type="term" value="C:plasma membrane"/>
    <property type="evidence" value="ECO:0007669"/>
    <property type="project" value="UniProtKB-SubCell"/>
</dbReference>
<dbReference type="GO" id="GO:0005524">
    <property type="term" value="F:ATP binding"/>
    <property type="evidence" value="ECO:0007669"/>
    <property type="project" value="UniProtKB-KW"/>
</dbReference>
<dbReference type="GO" id="GO:0016887">
    <property type="term" value="F:ATP hydrolysis activity"/>
    <property type="evidence" value="ECO:0007669"/>
    <property type="project" value="InterPro"/>
</dbReference>
<dbReference type="GO" id="GO:0015415">
    <property type="term" value="F:ATPase-coupled phosphate ion transmembrane transporter activity"/>
    <property type="evidence" value="ECO:0007669"/>
    <property type="project" value="UniProtKB-EC"/>
</dbReference>
<dbReference type="GO" id="GO:0035435">
    <property type="term" value="P:phosphate ion transmembrane transport"/>
    <property type="evidence" value="ECO:0007669"/>
    <property type="project" value="InterPro"/>
</dbReference>
<dbReference type="CDD" id="cd03260">
    <property type="entry name" value="ABC_PstB_phosphate_transporter"/>
    <property type="match status" value="1"/>
</dbReference>
<dbReference type="Gene3D" id="3.40.50.300">
    <property type="entry name" value="P-loop containing nucleotide triphosphate hydrolases"/>
    <property type="match status" value="1"/>
</dbReference>
<dbReference type="InterPro" id="IPR003593">
    <property type="entry name" value="AAA+_ATPase"/>
</dbReference>
<dbReference type="InterPro" id="IPR003439">
    <property type="entry name" value="ABC_transporter-like_ATP-bd"/>
</dbReference>
<dbReference type="InterPro" id="IPR017871">
    <property type="entry name" value="ABC_transporter-like_CS"/>
</dbReference>
<dbReference type="InterPro" id="IPR027417">
    <property type="entry name" value="P-loop_NTPase"/>
</dbReference>
<dbReference type="InterPro" id="IPR005670">
    <property type="entry name" value="PstB-like"/>
</dbReference>
<dbReference type="NCBIfam" id="TIGR00972">
    <property type="entry name" value="3a0107s01c2"/>
    <property type="match status" value="1"/>
</dbReference>
<dbReference type="PANTHER" id="PTHR43423">
    <property type="entry name" value="ABC TRANSPORTER I FAMILY MEMBER 17"/>
    <property type="match status" value="1"/>
</dbReference>
<dbReference type="PANTHER" id="PTHR43423:SF1">
    <property type="entry name" value="ABC TRANSPORTER I FAMILY MEMBER 17"/>
    <property type="match status" value="1"/>
</dbReference>
<dbReference type="Pfam" id="PF00005">
    <property type="entry name" value="ABC_tran"/>
    <property type="match status" value="1"/>
</dbReference>
<dbReference type="SMART" id="SM00382">
    <property type="entry name" value="AAA"/>
    <property type="match status" value="1"/>
</dbReference>
<dbReference type="SUPFAM" id="SSF52540">
    <property type="entry name" value="P-loop containing nucleoside triphosphate hydrolases"/>
    <property type="match status" value="1"/>
</dbReference>
<dbReference type="PROSITE" id="PS00211">
    <property type="entry name" value="ABC_TRANSPORTER_1"/>
    <property type="match status" value="1"/>
</dbReference>
<dbReference type="PROSITE" id="PS50893">
    <property type="entry name" value="ABC_TRANSPORTER_2"/>
    <property type="match status" value="1"/>
</dbReference>
<dbReference type="PROSITE" id="PS51238">
    <property type="entry name" value="PSTB"/>
    <property type="match status" value="1"/>
</dbReference>
<keyword id="KW-0067">ATP-binding</keyword>
<keyword id="KW-0997">Cell inner membrane</keyword>
<keyword id="KW-1003">Cell membrane</keyword>
<keyword id="KW-0472">Membrane</keyword>
<keyword id="KW-0547">Nucleotide-binding</keyword>
<keyword id="KW-0592">Phosphate transport</keyword>
<keyword id="KW-1278">Translocase</keyword>
<keyword id="KW-0813">Transport</keyword>